<feature type="initiator methionine" description="Removed; by host">
    <location>
        <position position="1"/>
    </location>
</feature>
<feature type="chain" id="PRO_0000144950" description="Capsid protein">
    <location>
        <begin position="2"/>
        <end position="159"/>
    </location>
</feature>
<feature type="modified residue" description="N-acetylserine; by host" evidence="1">
    <location>
        <position position="2"/>
    </location>
</feature>
<feature type="sequence conflict" description="In Ref. 2." evidence="2" ref="2">
    <original>S</original>
    <variation>T</variation>
    <location>
        <position position="31"/>
    </location>
</feature>
<accession>P03576</accession>
<accession>P03577</accession>
<evidence type="ECO:0000250" key="1"/>
<evidence type="ECO:0000305" key="2"/>
<comment type="function">
    <text>Capsid protein self-assembles to form rod-shaped virions about 18 nm in diameter with a central canal enclosing the viral genomic RNA.</text>
</comment>
<comment type="subcellular location">
    <subcellularLocation>
        <location evidence="2">Virion</location>
    </subcellularLocation>
</comment>
<comment type="similarity">
    <text evidence="2">Belongs to the virgaviridae capsid protein family.</text>
</comment>
<proteinExistence type="inferred from homology"/>
<organism>
    <name type="scientific">Tomato mosaic virus (strain L)</name>
    <name type="common">ToMV</name>
    <name type="synonym">TMV strain tomato</name>
    <dbReference type="NCBI Taxonomy" id="12252"/>
    <lineage>
        <taxon>Viruses</taxon>
        <taxon>Riboviria</taxon>
        <taxon>Orthornavirae</taxon>
        <taxon>Kitrinoviricota</taxon>
        <taxon>Alsuviricetes</taxon>
        <taxon>Martellivirales</taxon>
        <taxon>Virgaviridae</taxon>
        <taxon>Tobamovirus</taxon>
        <taxon>Tobacco mosaic virus</taxon>
    </lineage>
</organism>
<dbReference type="EMBL" id="X02144">
    <property type="protein sequence ID" value="CAA26084.1"/>
    <property type="molecule type" value="Genomic_RNA"/>
</dbReference>
<dbReference type="RefSeq" id="NP_078449.1">
    <property type="nucleotide sequence ID" value="NC_002692.1"/>
</dbReference>
<dbReference type="SMR" id="P03576"/>
<dbReference type="KEGG" id="vg:920840"/>
<dbReference type="Proteomes" id="UP000001451">
    <property type="component" value="Genome"/>
</dbReference>
<dbReference type="GO" id="GO:0019029">
    <property type="term" value="C:helical viral capsid"/>
    <property type="evidence" value="ECO:0007669"/>
    <property type="project" value="UniProtKB-KW"/>
</dbReference>
<dbReference type="GO" id="GO:0005198">
    <property type="term" value="F:structural molecule activity"/>
    <property type="evidence" value="ECO:0007669"/>
    <property type="project" value="InterPro"/>
</dbReference>
<dbReference type="Gene3D" id="1.20.120.70">
    <property type="entry name" value="Tobacco mosaic virus-like, coat protein"/>
    <property type="match status" value="1"/>
</dbReference>
<dbReference type="InterPro" id="IPR001337">
    <property type="entry name" value="TMV-like_coat"/>
</dbReference>
<dbReference type="InterPro" id="IPR036417">
    <property type="entry name" value="TMV-like_coat_sf"/>
</dbReference>
<dbReference type="Pfam" id="PF00721">
    <property type="entry name" value="TMV_coat"/>
    <property type="match status" value="1"/>
</dbReference>
<dbReference type="SUPFAM" id="SSF47195">
    <property type="entry name" value="TMV-like viral coat proteins"/>
    <property type="match status" value="1"/>
</dbReference>
<gene>
    <name type="primary">CP</name>
</gene>
<name>CAPSD_TOML</name>
<keyword id="KW-0007">Acetylation</keyword>
<keyword id="KW-0167">Capsid protein</keyword>
<keyword id="KW-1139">Helical capsid protein</keyword>
<keyword id="KW-0946">Virion</keyword>
<organismHost>
    <name type="scientific">Antirrhinum majus</name>
    <name type="common">Garden snapdragon</name>
    <dbReference type="NCBI Taxonomy" id="4151"/>
</organismHost>
<organismHost>
    <name type="scientific">Capsicum</name>
    <name type="common">peppers</name>
    <dbReference type="NCBI Taxonomy" id="4071"/>
</organismHost>
<organismHost>
    <name type="scientific">Delphinium</name>
    <dbReference type="NCBI Taxonomy" id="46246"/>
</organismHost>
<organismHost>
    <name type="scientific">Petunia</name>
    <dbReference type="NCBI Taxonomy" id="4101"/>
</organismHost>
<organismHost>
    <name type="scientific">Solanum lycopersicum</name>
    <name type="common">Tomato</name>
    <name type="synonym">Lycopersicon esculentum</name>
    <dbReference type="NCBI Taxonomy" id="4081"/>
</organismHost>
<organismHost>
    <name type="scientific">Tagetes</name>
    <name type="common">marigolds</name>
    <dbReference type="NCBI Taxonomy" id="13707"/>
</organismHost>
<sequence>MSYSITSPSQFVFLSSVWADPIELLNVCTNSLGNQFQTQQARTTVQQQFSEVWKPFPQSTVRFPGDVYKVYRYNAVLDPLITALLGAFDTRNRIIEVENQQSPTTAETLDATRRVDDATVAIRSAINNLVNELVRGTGLYNQNTFESMSGLVWTSAPAS</sequence>
<reference key="1">
    <citation type="journal article" date="1984" name="J. Biochem.">
        <title>Nucleotide sequence of the tobacco mosaic virus (tomato strain) genome and comparison with the common strain genome.</title>
        <authorList>
            <person name="Ohno T."/>
            <person name="Aoyagi M."/>
            <person name="Yamanashi Y."/>
            <person name="Saito H."/>
            <person name="Ikawa S."/>
            <person name="Meshi T."/>
            <person name="Okada Y."/>
        </authorList>
    </citation>
    <scope>NUCLEOTIDE SEQUENCE [GENOMIC RNA]</scope>
</reference>
<reference key="2">
    <citation type="journal article" date="1983" name="Nucleic Acids Res.">
        <title>Molecular cloning and nucleotide sequence of the 30K and the coat protein cistron of TMV (tomato strain) genome.</title>
        <authorList>
            <person name="Takamatsu N."/>
            <person name="Ohno T."/>
            <person name="Meshi T."/>
            <person name="Okada Y."/>
        </authorList>
    </citation>
    <scope>NUCLEOTIDE SEQUENCE [GENOMIC RNA]</scope>
</reference>
<protein>
    <recommendedName>
        <fullName>Capsid protein</fullName>
    </recommendedName>
    <alternativeName>
        <fullName>Coat protein</fullName>
    </alternativeName>
</protein>